<geneLocation type="mitochondrion"/>
<proteinExistence type="inferred from homology"/>
<organism>
    <name type="scientific">Pseudorca crassidens</name>
    <name type="common">False killer whale</name>
    <dbReference type="NCBI Taxonomy" id="82174"/>
    <lineage>
        <taxon>Eukaryota</taxon>
        <taxon>Metazoa</taxon>
        <taxon>Chordata</taxon>
        <taxon>Craniata</taxon>
        <taxon>Vertebrata</taxon>
        <taxon>Euteleostomi</taxon>
        <taxon>Mammalia</taxon>
        <taxon>Eutheria</taxon>
        <taxon>Laurasiatheria</taxon>
        <taxon>Artiodactyla</taxon>
        <taxon>Whippomorpha</taxon>
        <taxon>Cetacea</taxon>
        <taxon>Odontoceti</taxon>
        <taxon>Delphinidae</taxon>
        <taxon>Pseudorca</taxon>
    </lineage>
</organism>
<protein>
    <recommendedName>
        <fullName>Cytochrome b</fullName>
    </recommendedName>
    <alternativeName>
        <fullName>Complex III subunit 3</fullName>
    </alternativeName>
    <alternativeName>
        <fullName>Complex III subunit III</fullName>
    </alternativeName>
    <alternativeName>
        <fullName>Cytochrome b-c1 complex subunit 3</fullName>
    </alternativeName>
    <alternativeName>
        <fullName>Ubiquinol-cytochrome-c reductase complex cytochrome b subunit</fullName>
    </alternativeName>
</protein>
<dbReference type="EMBL" id="AF084057">
    <property type="protein sequence ID" value="AAD54434.1"/>
    <property type="molecule type" value="Genomic_DNA"/>
</dbReference>
<dbReference type="SMR" id="Q9TDM6"/>
<dbReference type="GO" id="GO:0005743">
    <property type="term" value="C:mitochondrial inner membrane"/>
    <property type="evidence" value="ECO:0007669"/>
    <property type="project" value="UniProtKB-SubCell"/>
</dbReference>
<dbReference type="GO" id="GO:0045275">
    <property type="term" value="C:respiratory chain complex III"/>
    <property type="evidence" value="ECO:0007669"/>
    <property type="project" value="InterPro"/>
</dbReference>
<dbReference type="GO" id="GO:0046872">
    <property type="term" value="F:metal ion binding"/>
    <property type="evidence" value="ECO:0007669"/>
    <property type="project" value="UniProtKB-KW"/>
</dbReference>
<dbReference type="GO" id="GO:0008121">
    <property type="term" value="F:ubiquinol-cytochrome-c reductase activity"/>
    <property type="evidence" value="ECO:0007669"/>
    <property type="project" value="InterPro"/>
</dbReference>
<dbReference type="GO" id="GO:0006122">
    <property type="term" value="P:mitochondrial electron transport, ubiquinol to cytochrome c"/>
    <property type="evidence" value="ECO:0007669"/>
    <property type="project" value="TreeGrafter"/>
</dbReference>
<dbReference type="CDD" id="cd00290">
    <property type="entry name" value="cytochrome_b_C"/>
    <property type="match status" value="1"/>
</dbReference>
<dbReference type="CDD" id="cd00284">
    <property type="entry name" value="Cytochrome_b_N"/>
    <property type="match status" value="1"/>
</dbReference>
<dbReference type="FunFam" id="1.20.810.10:FF:000002">
    <property type="entry name" value="Cytochrome b"/>
    <property type="match status" value="1"/>
</dbReference>
<dbReference type="Gene3D" id="1.20.810.10">
    <property type="entry name" value="Cytochrome Bc1 Complex, Chain C"/>
    <property type="match status" value="1"/>
</dbReference>
<dbReference type="InterPro" id="IPR005798">
    <property type="entry name" value="Cyt_b/b6_C"/>
</dbReference>
<dbReference type="InterPro" id="IPR036150">
    <property type="entry name" value="Cyt_b/b6_C_sf"/>
</dbReference>
<dbReference type="InterPro" id="IPR005797">
    <property type="entry name" value="Cyt_b/b6_N"/>
</dbReference>
<dbReference type="InterPro" id="IPR027387">
    <property type="entry name" value="Cytb/b6-like_sf"/>
</dbReference>
<dbReference type="InterPro" id="IPR030689">
    <property type="entry name" value="Cytochrome_b"/>
</dbReference>
<dbReference type="InterPro" id="IPR048260">
    <property type="entry name" value="Cytochrome_b_C_euk/bac"/>
</dbReference>
<dbReference type="InterPro" id="IPR048259">
    <property type="entry name" value="Cytochrome_b_N_euk/bac"/>
</dbReference>
<dbReference type="InterPro" id="IPR016174">
    <property type="entry name" value="Di-haem_cyt_TM"/>
</dbReference>
<dbReference type="PANTHER" id="PTHR19271">
    <property type="entry name" value="CYTOCHROME B"/>
    <property type="match status" value="1"/>
</dbReference>
<dbReference type="PANTHER" id="PTHR19271:SF16">
    <property type="entry name" value="CYTOCHROME B"/>
    <property type="match status" value="1"/>
</dbReference>
<dbReference type="Pfam" id="PF00032">
    <property type="entry name" value="Cytochrom_B_C"/>
    <property type="match status" value="1"/>
</dbReference>
<dbReference type="Pfam" id="PF00033">
    <property type="entry name" value="Cytochrome_B"/>
    <property type="match status" value="1"/>
</dbReference>
<dbReference type="PIRSF" id="PIRSF038885">
    <property type="entry name" value="COB"/>
    <property type="match status" value="1"/>
</dbReference>
<dbReference type="SUPFAM" id="SSF81648">
    <property type="entry name" value="a domain/subunit of cytochrome bc1 complex (Ubiquinol-cytochrome c reductase)"/>
    <property type="match status" value="1"/>
</dbReference>
<dbReference type="SUPFAM" id="SSF81342">
    <property type="entry name" value="Transmembrane di-heme cytochromes"/>
    <property type="match status" value="1"/>
</dbReference>
<dbReference type="PROSITE" id="PS51003">
    <property type="entry name" value="CYTB_CTER"/>
    <property type="match status" value="1"/>
</dbReference>
<dbReference type="PROSITE" id="PS51002">
    <property type="entry name" value="CYTB_NTER"/>
    <property type="match status" value="1"/>
</dbReference>
<evidence type="ECO:0000250" key="1"/>
<evidence type="ECO:0000250" key="2">
    <source>
        <dbReference type="UniProtKB" id="P00157"/>
    </source>
</evidence>
<evidence type="ECO:0000255" key="3">
    <source>
        <dbReference type="PROSITE-ProRule" id="PRU00967"/>
    </source>
</evidence>
<evidence type="ECO:0000255" key="4">
    <source>
        <dbReference type="PROSITE-ProRule" id="PRU00968"/>
    </source>
</evidence>
<reference key="1">
    <citation type="journal article" date="1999" name="Mar. Mamm. Sci.">
        <title>Phylogenetic relationships among the delphinid cetaceans based on full cytochrome b sequences.</title>
        <authorList>
            <person name="LeDuc R.G."/>
            <person name="Perrin W.F."/>
            <person name="Dizon A.E."/>
        </authorList>
    </citation>
    <scope>NUCLEOTIDE SEQUENCE [GENOMIC DNA]</scope>
</reference>
<comment type="function">
    <text evidence="2">Component of the ubiquinol-cytochrome c reductase complex (complex III or cytochrome b-c1 complex) that is part of the mitochondrial respiratory chain. The b-c1 complex mediates electron transfer from ubiquinol to cytochrome c. Contributes to the generation of a proton gradient across the mitochondrial membrane that is then used for ATP synthesis.</text>
</comment>
<comment type="cofactor">
    <cofactor evidence="2">
        <name>heme b</name>
        <dbReference type="ChEBI" id="CHEBI:60344"/>
    </cofactor>
    <text evidence="2">Binds 2 heme b groups non-covalently.</text>
</comment>
<comment type="subunit">
    <text evidence="2">The cytochrome bc1 complex contains 11 subunits: 3 respiratory subunits (MT-CYB, CYC1 and UQCRFS1), 2 core proteins (UQCRC1 and UQCRC2) and 6 low-molecular weight proteins (UQCRH/QCR6, UQCRB/QCR7, UQCRQ/QCR8, UQCR10/QCR9, UQCR11/QCR10 and a cleavage product of UQCRFS1). This cytochrome bc1 complex then forms a dimer.</text>
</comment>
<comment type="subcellular location">
    <subcellularLocation>
        <location evidence="2">Mitochondrion inner membrane</location>
        <topology evidence="2">Multi-pass membrane protein</topology>
    </subcellularLocation>
</comment>
<comment type="miscellaneous">
    <text evidence="1">Heme 1 (or BL or b562) is low-potential and absorbs at about 562 nm, and heme 2 (or BH or b566) is high-potential and absorbs at about 566 nm.</text>
</comment>
<comment type="similarity">
    <text evidence="3 4">Belongs to the cytochrome b family.</text>
</comment>
<comment type="caution">
    <text evidence="2">The full-length protein contains only eight transmembrane helices, not nine as predicted by bioinformatics tools.</text>
</comment>
<accession>Q9TDM6</accession>
<gene>
    <name type="primary">MT-CYB</name>
    <name type="synonym">COB</name>
    <name type="synonym">CYTB</name>
    <name type="synonym">MTCYB</name>
</gene>
<sequence>MTNIRKTHPLMKIINNAFIDLPTPSNISSWWNFGSLLGLCLIMQILTGLFLAMHYTPDTSTAFSSVAHICRDVNYGWFIRYLHANGASMFFICLYAHIGRGLYYGSYMFQETWNIGVLLLLAVMATAFVGYVLPWGQMSFWGATVITNLLSAIPYIGTTLVEWIWGGFSVDKATLTRFFTLHFILPFIITALTATHLLFLHETGSNNPTGIPSNMDMIPFHPYYTIKDILGALLLILTLLTLTLFTPDLLGDPDNYIPANPLNTPAHIKPEWYFLFAYAILRSIPNKLGGVLALLLSILILIFIPMLQTSKQRSMMFRPFSQLVFWTLIADLLTLTWIGGQPVEHPYIILGQLASILYFLLILVLMPTVSLIENKLLKW</sequence>
<keyword id="KW-0249">Electron transport</keyword>
<keyword id="KW-0349">Heme</keyword>
<keyword id="KW-0408">Iron</keyword>
<keyword id="KW-0472">Membrane</keyword>
<keyword id="KW-0479">Metal-binding</keyword>
<keyword id="KW-0496">Mitochondrion</keyword>
<keyword id="KW-0999">Mitochondrion inner membrane</keyword>
<keyword id="KW-0679">Respiratory chain</keyword>
<keyword id="KW-0812">Transmembrane</keyword>
<keyword id="KW-1133">Transmembrane helix</keyword>
<keyword id="KW-0813">Transport</keyword>
<keyword id="KW-0830">Ubiquinone</keyword>
<feature type="chain" id="PRO_0000061448" description="Cytochrome b">
    <location>
        <begin position="1"/>
        <end position="379"/>
    </location>
</feature>
<feature type="transmembrane region" description="Helical" evidence="2">
    <location>
        <begin position="33"/>
        <end position="53"/>
    </location>
</feature>
<feature type="transmembrane region" description="Helical" evidence="2">
    <location>
        <begin position="77"/>
        <end position="98"/>
    </location>
</feature>
<feature type="transmembrane region" description="Helical" evidence="2">
    <location>
        <begin position="113"/>
        <end position="133"/>
    </location>
</feature>
<feature type="transmembrane region" description="Helical" evidence="2">
    <location>
        <begin position="178"/>
        <end position="198"/>
    </location>
</feature>
<feature type="transmembrane region" description="Helical" evidence="2">
    <location>
        <begin position="226"/>
        <end position="246"/>
    </location>
</feature>
<feature type="transmembrane region" description="Helical" evidence="2">
    <location>
        <begin position="288"/>
        <end position="308"/>
    </location>
</feature>
<feature type="transmembrane region" description="Helical" evidence="2">
    <location>
        <begin position="320"/>
        <end position="340"/>
    </location>
</feature>
<feature type="transmembrane region" description="Helical" evidence="2">
    <location>
        <begin position="347"/>
        <end position="367"/>
    </location>
</feature>
<feature type="binding site" description="axial binding residue" evidence="2">
    <location>
        <position position="83"/>
    </location>
    <ligand>
        <name>heme b</name>
        <dbReference type="ChEBI" id="CHEBI:60344"/>
        <label>b562</label>
    </ligand>
    <ligandPart>
        <name>Fe</name>
        <dbReference type="ChEBI" id="CHEBI:18248"/>
    </ligandPart>
</feature>
<feature type="binding site" description="axial binding residue" evidence="2">
    <location>
        <position position="97"/>
    </location>
    <ligand>
        <name>heme b</name>
        <dbReference type="ChEBI" id="CHEBI:60344"/>
        <label>b566</label>
    </ligand>
    <ligandPart>
        <name>Fe</name>
        <dbReference type="ChEBI" id="CHEBI:18248"/>
    </ligandPart>
</feature>
<feature type="binding site" description="axial binding residue" evidence="2">
    <location>
        <position position="182"/>
    </location>
    <ligand>
        <name>heme b</name>
        <dbReference type="ChEBI" id="CHEBI:60344"/>
        <label>b562</label>
    </ligand>
    <ligandPart>
        <name>Fe</name>
        <dbReference type="ChEBI" id="CHEBI:18248"/>
    </ligandPart>
</feature>
<feature type="binding site" description="axial binding residue" evidence="2">
    <location>
        <position position="196"/>
    </location>
    <ligand>
        <name>heme b</name>
        <dbReference type="ChEBI" id="CHEBI:60344"/>
        <label>b566</label>
    </ligand>
    <ligandPart>
        <name>Fe</name>
        <dbReference type="ChEBI" id="CHEBI:18248"/>
    </ligandPart>
</feature>
<feature type="binding site" evidence="2">
    <location>
        <position position="201"/>
    </location>
    <ligand>
        <name>a ubiquinone</name>
        <dbReference type="ChEBI" id="CHEBI:16389"/>
    </ligand>
</feature>
<name>CYB_PSECS</name>